<gene>
    <name type="primary">Nrx-IV</name>
    <name type="synonym">Nrx</name>
    <name type="ORF">CG6827</name>
</gene>
<name>NRX4_DROME</name>
<comment type="function">
    <text evidence="10">Seems to play a role in the formation and function of septate junctions. Septate junctions, which are the equivalent of vertebrates tight junctions, are characterized by regular arrays of transverse structures that span the intermembrane space and form a physical barrier to diffusion. Required for the blood-brain barrier formation.</text>
</comment>
<comment type="subunit">
    <text evidence="6 7 9 11">Forms a complex with Nrg and Cont (PubMed:15459097). Forms a complex composed of septa junction proteins Nrx-IV/Nrx, Tsf2/MTf, Cont and Nrg during late embryogenesis (PubMed:20935638). The C-terminal region interacts with coracle (PubMed:9508778). Interacts with Patj in cis form (PubMed:10102271).</text>
</comment>
<comment type="subcellular location">
    <subcellularLocation>
        <location evidence="9">Cell membrane</location>
        <topology evidence="12">Single-pass type I membrane protein</topology>
    </subcellularLocation>
    <subcellularLocation>
        <location evidence="9">Cell junction</location>
        <location evidence="9">Septate junction</location>
    </subcellularLocation>
</comment>
<comment type="tissue specificity">
    <text evidence="10">Found in septate junctions of epithelial and glial cells.</text>
</comment>
<comment type="developmental stage">
    <text evidence="9">In embryos, expressed in trachea and hindgut (at protein level).</text>
</comment>
<comment type="similarity">
    <text evidence="12">Belongs to the neurexin family.</text>
</comment>
<accession>Q94887</accession>
<accession>Q9VTU5</accession>
<organism>
    <name type="scientific">Drosophila melanogaster</name>
    <name type="common">Fruit fly</name>
    <dbReference type="NCBI Taxonomy" id="7227"/>
    <lineage>
        <taxon>Eukaryota</taxon>
        <taxon>Metazoa</taxon>
        <taxon>Ecdysozoa</taxon>
        <taxon>Arthropoda</taxon>
        <taxon>Hexapoda</taxon>
        <taxon>Insecta</taxon>
        <taxon>Pterygota</taxon>
        <taxon>Neoptera</taxon>
        <taxon>Endopterygota</taxon>
        <taxon>Diptera</taxon>
        <taxon>Brachycera</taxon>
        <taxon>Muscomorpha</taxon>
        <taxon>Ephydroidea</taxon>
        <taxon>Drosophilidae</taxon>
        <taxon>Drosophila</taxon>
        <taxon>Sophophora</taxon>
    </lineage>
</organism>
<keyword id="KW-0130">Cell adhesion</keyword>
<keyword id="KW-0965">Cell junction</keyword>
<keyword id="KW-1003">Cell membrane</keyword>
<keyword id="KW-1015">Disulfide bond</keyword>
<keyword id="KW-0245">EGF-like domain</keyword>
<keyword id="KW-0325">Glycoprotein</keyword>
<keyword id="KW-0472">Membrane</keyword>
<keyword id="KW-1185">Reference proteome</keyword>
<keyword id="KW-0677">Repeat</keyword>
<keyword id="KW-0732">Signal</keyword>
<keyword id="KW-0812">Transmembrane</keyword>
<keyword id="KW-1133">Transmembrane helix</keyword>
<feature type="signal peptide" evidence="2">
    <location>
        <begin position="1"/>
        <end position="35"/>
    </location>
</feature>
<feature type="chain" id="PRO_0000019512" description="Neurexin-4">
    <location>
        <begin position="36"/>
        <end position="1284"/>
    </location>
</feature>
<feature type="topological domain" description="Extracellular" evidence="2">
    <location>
        <begin position="36"/>
        <end position="1217"/>
    </location>
</feature>
<feature type="transmembrane region" description="Helical" evidence="2">
    <location>
        <begin position="1218"/>
        <end position="1238"/>
    </location>
</feature>
<feature type="topological domain" description="Cytoplasmic" evidence="2">
    <location>
        <begin position="1239"/>
        <end position="1284"/>
    </location>
</feature>
<feature type="domain" description="F5/8 type C" evidence="4">
    <location>
        <begin position="47"/>
        <end position="185"/>
    </location>
</feature>
<feature type="domain" description="Laminin G-like 1" evidence="5">
    <location>
        <begin position="220"/>
        <end position="369"/>
    </location>
</feature>
<feature type="domain" description="Laminin G-like 2" evidence="5">
    <location>
        <begin position="403"/>
        <end position="540"/>
    </location>
</feature>
<feature type="domain" description="EGF-like 1" evidence="3">
    <location>
        <begin position="542"/>
        <end position="579"/>
    </location>
</feature>
<feature type="domain" description="Laminin G-like 3" evidence="5">
    <location>
        <begin position="824"/>
        <end position="962"/>
    </location>
</feature>
<feature type="domain" description="EGF-like 2" evidence="3">
    <location>
        <begin position="962"/>
        <end position="999"/>
    </location>
</feature>
<feature type="domain" description="Laminin G-like 4" evidence="5">
    <location>
        <begin position="1032"/>
        <end position="1183"/>
    </location>
</feature>
<feature type="glycosylation site" description="N-linked (GlcNAc...) asparagine" evidence="2">
    <location>
        <position position="195"/>
    </location>
</feature>
<feature type="glycosylation site" description="N-linked (GlcNAc...) asparagine" evidence="2">
    <location>
        <position position="329"/>
    </location>
</feature>
<feature type="glycosylation site" description="N-linked (GlcNAc...) asparagine" evidence="2">
    <location>
        <position position="340"/>
    </location>
</feature>
<feature type="glycosylation site" description="N-linked (GlcNAc...) asparagine" evidence="2">
    <location>
        <position position="398"/>
    </location>
</feature>
<feature type="glycosylation site" description="N-linked (GlcNAc...) asparagine" evidence="2">
    <location>
        <position position="668"/>
    </location>
</feature>
<feature type="glycosylation site" description="N-linked (GlcNAc...) asparagine" evidence="2">
    <location>
        <position position="974"/>
    </location>
</feature>
<feature type="glycosylation site" description="N-linked (GlcNAc...) asparagine" evidence="2">
    <location>
        <position position="1047"/>
    </location>
</feature>
<feature type="glycosylation site" description="N-linked (GlcNAc...) asparagine" evidence="8">
    <location>
        <position position="1137"/>
    </location>
</feature>
<feature type="disulfide bond" evidence="1">
    <location>
        <begin position="47"/>
        <end position="185"/>
    </location>
</feature>
<feature type="disulfide bond" evidence="1">
    <location>
        <begin position="333"/>
        <end position="369"/>
    </location>
</feature>
<feature type="disulfide bond" evidence="1">
    <location>
        <begin position="507"/>
        <end position="540"/>
    </location>
</feature>
<feature type="disulfide bond" evidence="1">
    <location>
        <begin position="546"/>
        <end position="557"/>
    </location>
</feature>
<feature type="disulfide bond" evidence="1">
    <location>
        <begin position="551"/>
        <end position="566"/>
    </location>
</feature>
<feature type="disulfide bond" evidence="1">
    <location>
        <begin position="568"/>
        <end position="578"/>
    </location>
</feature>
<feature type="disulfide bond" evidence="1">
    <location>
        <begin position="934"/>
        <end position="962"/>
    </location>
</feature>
<feature type="disulfide bond" evidence="1">
    <location>
        <begin position="966"/>
        <end position="977"/>
    </location>
</feature>
<feature type="disulfide bond" evidence="1">
    <location>
        <begin position="971"/>
        <end position="986"/>
    </location>
</feature>
<feature type="disulfide bond" evidence="1">
    <location>
        <begin position="988"/>
        <end position="998"/>
    </location>
</feature>
<feature type="disulfide bond" evidence="1">
    <location>
        <begin position="1147"/>
        <end position="1183"/>
    </location>
</feature>
<feature type="sequence conflict" description="In Ref. 1." evidence="12" ref="1">
    <original>MRPP</original>
    <variation>MSA</variation>
    <location>
        <begin position="1"/>
        <end position="4"/>
    </location>
</feature>
<feature type="sequence conflict" description="In Ref. 1; CAA60383." evidence="12" ref="1">
    <original>E</original>
    <variation>D</variation>
    <location>
        <position position="926"/>
    </location>
</feature>
<proteinExistence type="evidence at protein level"/>
<reference key="1">
    <citation type="journal article" date="1996" name="Cell">
        <title>A Drosophila neurexin is required for septate junction and blood-nerve barrier formation and function.</title>
        <authorList>
            <person name="Baumgartner S.W."/>
            <person name="Littleton J.T."/>
            <person name="Broadie K."/>
            <person name="Bhat M.A."/>
            <person name="Harbecke R."/>
            <person name="Lengyel J.A."/>
            <person name="Chiquet-Ehrismann R."/>
            <person name="Prokop A."/>
            <person name="Bellen H.J."/>
        </authorList>
    </citation>
    <scope>NUCLEOTIDE SEQUENCE [MRNA]</scope>
    <scope>FUNCTION</scope>
    <scope>TISSUE SPECIFICITY</scope>
    <source>
        <strain>Canton-S</strain>
    </source>
</reference>
<reference key="2">
    <citation type="journal article" date="2000" name="Science">
        <title>The genome sequence of Drosophila melanogaster.</title>
        <authorList>
            <person name="Adams M.D."/>
            <person name="Celniker S.E."/>
            <person name="Holt R.A."/>
            <person name="Evans C.A."/>
            <person name="Gocayne J.D."/>
            <person name="Amanatides P.G."/>
            <person name="Scherer S.E."/>
            <person name="Li P.W."/>
            <person name="Hoskins R.A."/>
            <person name="Galle R.F."/>
            <person name="George R.A."/>
            <person name="Lewis S.E."/>
            <person name="Richards S."/>
            <person name="Ashburner M."/>
            <person name="Henderson S.N."/>
            <person name="Sutton G.G."/>
            <person name="Wortman J.R."/>
            <person name="Yandell M.D."/>
            <person name="Zhang Q."/>
            <person name="Chen L.X."/>
            <person name="Brandon R.C."/>
            <person name="Rogers Y.-H.C."/>
            <person name="Blazej R.G."/>
            <person name="Champe M."/>
            <person name="Pfeiffer B.D."/>
            <person name="Wan K.H."/>
            <person name="Doyle C."/>
            <person name="Baxter E.G."/>
            <person name="Helt G."/>
            <person name="Nelson C.R."/>
            <person name="Miklos G.L.G."/>
            <person name="Abril J.F."/>
            <person name="Agbayani A."/>
            <person name="An H.-J."/>
            <person name="Andrews-Pfannkoch C."/>
            <person name="Baldwin D."/>
            <person name="Ballew R.M."/>
            <person name="Basu A."/>
            <person name="Baxendale J."/>
            <person name="Bayraktaroglu L."/>
            <person name="Beasley E.M."/>
            <person name="Beeson K.Y."/>
            <person name="Benos P.V."/>
            <person name="Berman B.P."/>
            <person name="Bhandari D."/>
            <person name="Bolshakov S."/>
            <person name="Borkova D."/>
            <person name="Botchan M.R."/>
            <person name="Bouck J."/>
            <person name="Brokstein P."/>
            <person name="Brottier P."/>
            <person name="Burtis K.C."/>
            <person name="Busam D.A."/>
            <person name="Butler H."/>
            <person name="Cadieu E."/>
            <person name="Center A."/>
            <person name="Chandra I."/>
            <person name="Cherry J.M."/>
            <person name="Cawley S."/>
            <person name="Dahlke C."/>
            <person name="Davenport L.B."/>
            <person name="Davies P."/>
            <person name="de Pablos B."/>
            <person name="Delcher A."/>
            <person name="Deng Z."/>
            <person name="Mays A.D."/>
            <person name="Dew I."/>
            <person name="Dietz S.M."/>
            <person name="Dodson K."/>
            <person name="Doup L.E."/>
            <person name="Downes M."/>
            <person name="Dugan-Rocha S."/>
            <person name="Dunkov B.C."/>
            <person name="Dunn P."/>
            <person name="Durbin K.J."/>
            <person name="Evangelista C.C."/>
            <person name="Ferraz C."/>
            <person name="Ferriera S."/>
            <person name="Fleischmann W."/>
            <person name="Fosler C."/>
            <person name="Gabrielian A.E."/>
            <person name="Garg N.S."/>
            <person name="Gelbart W.M."/>
            <person name="Glasser K."/>
            <person name="Glodek A."/>
            <person name="Gong F."/>
            <person name="Gorrell J.H."/>
            <person name="Gu Z."/>
            <person name="Guan P."/>
            <person name="Harris M."/>
            <person name="Harris N.L."/>
            <person name="Harvey D.A."/>
            <person name="Heiman T.J."/>
            <person name="Hernandez J.R."/>
            <person name="Houck J."/>
            <person name="Hostin D."/>
            <person name="Houston K.A."/>
            <person name="Howland T.J."/>
            <person name="Wei M.-H."/>
            <person name="Ibegwam C."/>
            <person name="Jalali M."/>
            <person name="Kalush F."/>
            <person name="Karpen G.H."/>
            <person name="Ke Z."/>
            <person name="Kennison J.A."/>
            <person name="Ketchum K.A."/>
            <person name="Kimmel B.E."/>
            <person name="Kodira C.D."/>
            <person name="Kraft C.L."/>
            <person name="Kravitz S."/>
            <person name="Kulp D."/>
            <person name="Lai Z."/>
            <person name="Lasko P."/>
            <person name="Lei Y."/>
            <person name="Levitsky A.A."/>
            <person name="Li J.H."/>
            <person name="Li Z."/>
            <person name="Liang Y."/>
            <person name="Lin X."/>
            <person name="Liu X."/>
            <person name="Mattei B."/>
            <person name="McIntosh T.C."/>
            <person name="McLeod M.P."/>
            <person name="McPherson D."/>
            <person name="Merkulov G."/>
            <person name="Milshina N.V."/>
            <person name="Mobarry C."/>
            <person name="Morris J."/>
            <person name="Moshrefi A."/>
            <person name="Mount S.M."/>
            <person name="Moy M."/>
            <person name="Murphy B."/>
            <person name="Murphy L."/>
            <person name="Muzny D.M."/>
            <person name="Nelson D.L."/>
            <person name="Nelson D.R."/>
            <person name="Nelson K.A."/>
            <person name="Nixon K."/>
            <person name="Nusskern D.R."/>
            <person name="Pacleb J.M."/>
            <person name="Palazzolo M."/>
            <person name="Pittman G.S."/>
            <person name="Pan S."/>
            <person name="Pollard J."/>
            <person name="Puri V."/>
            <person name="Reese M.G."/>
            <person name="Reinert K."/>
            <person name="Remington K."/>
            <person name="Saunders R.D.C."/>
            <person name="Scheeler F."/>
            <person name="Shen H."/>
            <person name="Shue B.C."/>
            <person name="Siden-Kiamos I."/>
            <person name="Simpson M."/>
            <person name="Skupski M.P."/>
            <person name="Smith T.J."/>
            <person name="Spier E."/>
            <person name="Spradling A.C."/>
            <person name="Stapleton M."/>
            <person name="Strong R."/>
            <person name="Sun E."/>
            <person name="Svirskas R."/>
            <person name="Tector C."/>
            <person name="Turner R."/>
            <person name="Venter E."/>
            <person name="Wang A.H."/>
            <person name="Wang X."/>
            <person name="Wang Z.-Y."/>
            <person name="Wassarman D.A."/>
            <person name="Weinstock G.M."/>
            <person name="Weissenbach J."/>
            <person name="Williams S.M."/>
            <person name="Woodage T."/>
            <person name="Worley K.C."/>
            <person name="Wu D."/>
            <person name="Yang S."/>
            <person name="Yao Q.A."/>
            <person name="Ye J."/>
            <person name="Yeh R.-F."/>
            <person name="Zaveri J.S."/>
            <person name="Zhan M."/>
            <person name="Zhang G."/>
            <person name="Zhao Q."/>
            <person name="Zheng L."/>
            <person name="Zheng X.H."/>
            <person name="Zhong F.N."/>
            <person name="Zhong W."/>
            <person name="Zhou X."/>
            <person name="Zhu S.C."/>
            <person name="Zhu X."/>
            <person name="Smith H.O."/>
            <person name="Gibbs R.A."/>
            <person name="Myers E.W."/>
            <person name="Rubin G.M."/>
            <person name="Venter J.C."/>
        </authorList>
    </citation>
    <scope>NUCLEOTIDE SEQUENCE [LARGE SCALE GENOMIC DNA]</scope>
    <source>
        <strain>Berkeley</strain>
    </source>
</reference>
<reference key="3">
    <citation type="journal article" date="2002" name="Genome Biol.">
        <title>Annotation of the Drosophila melanogaster euchromatic genome: a systematic review.</title>
        <authorList>
            <person name="Misra S."/>
            <person name="Crosby M.A."/>
            <person name="Mungall C.J."/>
            <person name="Matthews B.B."/>
            <person name="Campbell K.S."/>
            <person name="Hradecky P."/>
            <person name="Huang Y."/>
            <person name="Kaminker J.S."/>
            <person name="Millburn G.H."/>
            <person name="Prochnik S.E."/>
            <person name="Smith C.D."/>
            <person name="Tupy J.L."/>
            <person name="Whitfield E.J."/>
            <person name="Bayraktaroglu L."/>
            <person name="Berman B.P."/>
            <person name="Bettencourt B.R."/>
            <person name="Celniker S.E."/>
            <person name="de Grey A.D.N.J."/>
            <person name="Drysdale R.A."/>
            <person name="Harris N.L."/>
            <person name="Richter J."/>
            <person name="Russo S."/>
            <person name="Schroeder A.J."/>
            <person name="Shu S.Q."/>
            <person name="Stapleton M."/>
            <person name="Yamada C."/>
            <person name="Ashburner M."/>
            <person name="Gelbart W.M."/>
            <person name="Rubin G.M."/>
            <person name="Lewis S.E."/>
        </authorList>
    </citation>
    <scope>GENOME REANNOTATION</scope>
    <source>
        <strain>Berkeley</strain>
    </source>
</reference>
<reference key="4">
    <citation type="journal article" date="1998" name="J. Cell Biol.">
        <title>A conserved functional domain of Drosophila coracle is required for localization at the septate junction and has membrane-organizing activity.</title>
        <authorList>
            <person name="Ward R.E. IV"/>
            <person name="Lamb R.S."/>
            <person name="Fehon R.G."/>
        </authorList>
    </citation>
    <scope>INTERACTION WITH CORACLE</scope>
</reference>
<reference key="5">
    <citation type="journal article" date="1999" name="Cell">
        <title>Discs Lost, a novel multi-PDZ domain protein, establishes and maintains epithelial polarity.</title>
        <authorList>
            <person name="Bhat M.A."/>
            <person name="Izaddoost S."/>
            <person name="Lu Y."/>
            <person name="Cho K.-O."/>
            <person name="Choi K.-W."/>
            <person name="Bellen H.J."/>
        </authorList>
    </citation>
    <scope>INTERACTION WITH PATJ</scope>
</reference>
<reference key="6">
    <citation type="journal article" date="2003" name="Cell">
        <authorList>
            <person name="Bhat M.A."/>
            <person name="Izaddoost S."/>
            <person name="Lu Y."/>
            <person name="Cho K.-O."/>
            <person name="Choi K.-W."/>
            <person name="Bellen H.J."/>
        </authorList>
    </citation>
    <scope>ERRATUM OF PUBMED:10102271</scope>
</reference>
<reference key="7">
    <citation type="journal article" date="2004" name="Development">
        <title>Drosophila contactin, a homolog of vertebrate contactin, is required for septate junction organization and paracellular barrier function.</title>
        <authorList>
            <person name="Faivre-Sarrailh C."/>
            <person name="Banerjee S."/>
            <person name="Li J."/>
            <person name="Hortsch M."/>
            <person name="Laval M."/>
            <person name="Bhat M.A."/>
        </authorList>
    </citation>
    <scope>IDENTIFICATION IN A COMPLEX WITH NRX AND CONT</scope>
</reference>
<reference key="8">
    <citation type="journal article" date="2007" name="Glycobiology">
        <title>Identification of N-glycosylated proteins from the central nervous system of Drosophila melanogaster.</title>
        <authorList>
            <person name="Koles K."/>
            <person name="Lim J.-M."/>
            <person name="Aoki K."/>
            <person name="Porterfield M."/>
            <person name="Tiemeyer M."/>
            <person name="Wells L."/>
            <person name="Panin V."/>
        </authorList>
    </citation>
    <scope>GLYCOSYLATION [LARGE SCALE ANALYSIS] AT ASN-1137</scope>
    <scope>IDENTIFICATION BY MASS SPECTROMETRY</scope>
    <source>
        <strain>Oregon-R</strain>
        <tissue>Head</tissue>
    </source>
</reference>
<reference key="9">
    <citation type="journal article" date="2010" name="Nat. Cell Biol.">
        <title>Epithelial septate junction assembly relies on melanotransferrin iron binding and endocytosis in Drosophila.</title>
        <authorList>
            <person name="Tiklova K."/>
            <person name="Senti K.A."/>
            <person name="Wang S."/>
            <person name="Graeslund A."/>
            <person name="Samakovlis C."/>
        </authorList>
    </citation>
    <scope>IDENTIFICATION IN A COMPLEX WITH TSF2; CONT AND NRG</scope>
    <scope>SUBCELLULAR LOCATION</scope>
    <scope>DEVELOPMENTAL STAGE</scope>
</reference>
<protein>
    <recommendedName>
        <fullName>Neurexin-4</fullName>
    </recommendedName>
    <alternativeName>
        <fullName>Neurexin IV</fullName>
    </alternativeName>
</protein>
<dbReference type="EMBL" id="X86685">
    <property type="protein sequence ID" value="CAA60383.1"/>
    <property type="molecule type" value="mRNA"/>
</dbReference>
<dbReference type="EMBL" id="AE014296">
    <property type="protein sequence ID" value="AAF49951.1"/>
    <property type="molecule type" value="Genomic_DNA"/>
</dbReference>
<dbReference type="PIR" id="T13799">
    <property type="entry name" value="T13799"/>
</dbReference>
<dbReference type="RefSeq" id="NP_524034.2">
    <property type="nucleotide sequence ID" value="NM_079310.3"/>
</dbReference>
<dbReference type="SMR" id="Q94887"/>
<dbReference type="BioGRID" id="64741">
    <property type="interactions" value="15"/>
</dbReference>
<dbReference type="FunCoup" id="Q94887">
    <property type="interactions" value="346"/>
</dbReference>
<dbReference type="IntAct" id="Q94887">
    <property type="interactions" value="30"/>
</dbReference>
<dbReference type="STRING" id="7227.FBpp0075730"/>
<dbReference type="GlyCosmos" id="Q94887">
    <property type="glycosylation" value="8 sites, No reported glycans"/>
</dbReference>
<dbReference type="GlyGen" id="Q94887">
    <property type="glycosylation" value="8 sites"/>
</dbReference>
<dbReference type="iPTMnet" id="Q94887"/>
<dbReference type="PaxDb" id="7227-FBpp0075730"/>
<dbReference type="EnsemblMetazoa" id="FBtr0075998">
    <property type="protein sequence ID" value="FBpp0075730"/>
    <property type="gene ID" value="FBgn0013997"/>
</dbReference>
<dbReference type="GeneID" id="39387"/>
<dbReference type="KEGG" id="dme:Dmel_CG6827"/>
<dbReference type="AGR" id="FB:FBgn0013997"/>
<dbReference type="CTD" id="39387"/>
<dbReference type="FlyBase" id="FBgn0013997">
    <property type="gene designation" value="Nrx-IV"/>
</dbReference>
<dbReference type="VEuPathDB" id="VectorBase:FBgn0013997"/>
<dbReference type="eggNOG" id="KOG3516">
    <property type="taxonomic scope" value="Eukaryota"/>
</dbReference>
<dbReference type="GeneTree" id="ENSGT00940000170887"/>
<dbReference type="InParanoid" id="Q94887"/>
<dbReference type="OMA" id="GWNCGRE"/>
<dbReference type="OrthoDB" id="26719at2759"/>
<dbReference type="PhylomeDB" id="Q94887"/>
<dbReference type="BioGRID-ORCS" id="39387">
    <property type="hits" value="0 hits in 3 CRISPR screens"/>
</dbReference>
<dbReference type="GenomeRNAi" id="39387"/>
<dbReference type="PRO" id="PR:Q94887"/>
<dbReference type="Proteomes" id="UP000000803">
    <property type="component" value="Chromosome 3L"/>
</dbReference>
<dbReference type="Bgee" id="FBgn0013997">
    <property type="expression patterns" value="Expressed in wing disc and 204 other cell types or tissues"/>
</dbReference>
<dbReference type="ExpressionAtlas" id="Q94887">
    <property type="expression patterns" value="baseline and differential"/>
</dbReference>
<dbReference type="GO" id="GO:0005886">
    <property type="term" value="C:plasma membrane"/>
    <property type="evidence" value="ECO:0000314"/>
    <property type="project" value="FlyBase"/>
</dbReference>
<dbReference type="GO" id="GO:0005919">
    <property type="term" value="C:pleated septate junction"/>
    <property type="evidence" value="ECO:0000314"/>
    <property type="project" value="FlyBase"/>
</dbReference>
<dbReference type="GO" id="GO:0048786">
    <property type="term" value="C:presynaptic active zone"/>
    <property type="evidence" value="ECO:0000314"/>
    <property type="project" value="BHF-UCL"/>
</dbReference>
<dbReference type="GO" id="GO:0045202">
    <property type="term" value="C:synapse"/>
    <property type="evidence" value="ECO:0000314"/>
    <property type="project" value="FlyBase"/>
</dbReference>
<dbReference type="GO" id="GO:0008366">
    <property type="term" value="P:axon ensheathment"/>
    <property type="evidence" value="ECO:0000315"/>
    <property type="project" value="FlyBase"/>
</dbReference>
<dbReference type="GO" id="GO:0061343">
    <property type="term" value="P:cell adhesion involved in heart morphogenesis"/>
    <property type="evidence" value="ECO:0000315"/>
    <property type="project" value="FlyBase"/>
</dbReference>
<dbReference type="GO" id="GO:0045216">
    <property type="term" value="P:cell-cell junction organization"/>
    <property type="evidence" value="ECO:0000304"/>
    <property type="project" value="FlyBase"/>
</dbReference>
<dbReference type="GO" id="GO:0007391">
    <property type="term" value="P:dorsal closure"/>
    <property type="evidence" value="ECO:0000315"/>
    <property type="project" value="FlyBase"/>
</dbReference>
<dbReference type="GO" id="GO:0060857">
    <property type="term" value="P:establishment of glial blood-brain barrier"/>
    <property type="evidence" value="ECO:0000315"/>
    <property type="project" value="FlyBase"/>
</dbReference>
<dbReference type="GO" id="GO:0003015">
    <property type="term" value="P:heart process"/>
    <property type="evidence" value="ECO:0000315"/>
    <property type="project" value="FlyBase"/>
</dbReference>
<dbReference type="GO" id="GO:0021682">
    <property type="term" value="P:nerve maturation"/>
    <property type="evidence" value="ECO:0000315"/>
    <property type="project" value="FlyBase"/>
</dbReference>
<dbReference type="GO" id="GO:0097105">
    <property type="term" value="P:presynaptic membrane assembly"/>
    <property type="evidence" value="ECO:0000315"/>
    <property type="project" value="BHF-UCL"/>
</dbReference>
<dbReference type="GO" id="GO:0008104">
    <property type="term" value="P:protein localization"/>
    <property type="evidence" value="ECO:0000304"/>
    <property type="project" value="FlyBase"/>
</dbReference>
<dbReference type="GO" id="GO:0035151">
    <property type="term" value="P:regulation of tube size, open tracheal system"/>
    <property type="evidence" value="ECO:0000315"/>
    <property type="project" value="FlyBase"/>
</dbReference>
<dbReference type="GO" id="GO:0019991">
    <property type="term" value="P:septate junction assembly"/>
    <property type="evidence" value="ECO:0000315"/>
    <property type="project" value="FlyBase"/>
</dbReference>
<dbReference type="GO" id="GO:0008039">
    <property type="term" value="P:synaptic target recognition"/>
    <property type="evidence" value="ECO:0000315"/>
    <property type="project" value="FlyBase"/>
</dbReference>
<dbReference type="GO" id="GO:0072553">
    <property type="term" value="P:terminal button organization"/>
    <property type="evidence" value="ECO:0000315"/>
    <property type="project" value="BHF-UCL"/>
</dbReference>
<dbReference type="CDD" id="cd00054">
    <property type="entry name" value="EGF_CA"/>
    <property type="match status" value="1"/>
</dbReference>
<dbReference type="CDD" id="cd00057">
    <property type="entry name" value="FA58C"/>
    <property type="match status" value="1"/>
</dbReference>
<dbReference type="CDD" id="cd00110">
    <property type="entry name" value="LamG"/>
    <property type="match status" value="4"/>
</dbReference>
<dbReference type="FunFam" id="2.60.120.200:FF:000026">
    <property type="entry name" value="contactin-associated protein-like 4 isoform X1"/>
    <property type="match status" value="1"/>
</dbReference>
<dbReference type="FunFam" id="2.60.120.260:FF:000172">
    <property type="entry name" value="neurexin-4 isoform X2"/>
    <property type="match status" value="1"/>
</dbReference>
<dbReference type="FunFam" id="2.60.120.1000:FF:000010">
    <property type="entry name" value="Uncharacterized protein, isoform B"/>
    <property type="match status" value="1"/>
</dbReference>
<dbReference type="FunFam" id="2.60.120.200:FF:000242">
    <property type="entry name" value="Uncharacterized protein, isoform B"/>
    <property type="match status" value="1"/>
</dbReference>
<dbReference type="FunFam" id="2.60.120.200:FF:000281">
    <property type="entry name" value="Uncharacterized protein, isoform B"/>
    <property type="match status" value="1"/>
</dbReference>
<dbReference type="Gene3D" id="2.60.120.1000">
    <property type="match status" value="1"/>
</dbReference>
<dbReference type="Gene3D" id="2.60.120.200">
    <property type="match status" value="4"/>
</dbReference>
<dbReference type="Gene3D" id="2.60.120.260">
    <property type="entry name" value="Galactose-binding domain-like"/>
    <property type="match status" value="1"/>
</dbReference>
<dbReference type="Gene3D" id="2.10.25.10">
    <property type="entry name" value="Laminin"/>
    <property type="match status" value="2"/>
</dbReference>
<dbReference type="InterPro" id="IPR013320">
    <property type="entry name" value="ConA-like_dom_sf"/>
</dbReference>
<dbReference type="InterPro" id="IPR000742">
    <property type="entry name" value="EGF-like_dom"/>
</dbReference>
<dbReference type="InterPro" id="IPR000421">
    <property type="entry name" value="FA58C"/>
</dbReference>
<dbReference type="InterPro" id="IPR008979">
    <property type="entry name" value="Galactose-bd-like_sf"/>
</dbReference>
<dbReference type="InterPro" id="IPR001791">
    <property type="entry name" value="Laminin_G"/>
</dbReference>
<dbReference type="InterPro" id="IPR003585">
    <property type="entry name" value="Neurexin-like"/>
</dbReference>
<dbReference type="InterPro" id="IPR050372">
    <property type="entry name" value="Neurexin-related_CASP"/>
</dbReference>
<dbReference type="PANTHER" id="PTHR15036:SF91">
    <property type="entry name" value="NEUREXIN-4"/>
    <property type="match status" value="1"/>
</dbReference>
<dbReference type="PANTHER" id="PTHR15036">
    <property type="entry name" value="PIKACHURIN-LIKE PROTEIN"/>
    <property type="match status" value="1"/>
</dbReference>
<dbReference type="Pfam" id="PF00008">
    <property type="entry name" value="EGF"/>
    <property type="match status" value="1"/>
</dbReference>
<dbReference type="Pfam" id="PF00754">
    <property type="entry name" value="F5_F8_type_C"/>
    <property type="match status" value="1"/>
</dbReference>
<dbReference type="Pfam" id="PF02210">
    <property type="entry name" value="Laminin_G_2"/>
    <property type="match status" value="4"/>
</dbReference>
<dbReference type="SMART" id="SM00294">
    <property type="entry name" value="4.1m"/>
    <property type="match status" value="1"/>
</dbReference>
<dbReference type="SMART" id="SM00181">
    <property type="entry name" value="EGF"/>
    <property type="match status" value="2"/>
</dbReference>
<dbReference type="SMART" id="SM00231">
    <property type="entry name" value="FA58C"/>
    <property type="match status" value="1"/>
</dbReference>
<dbReference type="SMART" id="SM00282">
    <property type="entry name" value="LamG"/>
    <property type="match status" value="4"/>
</dbReference>
<dbReference type="SUPFAM" id="SSF49899">
    <property type="entry name" value="Concanavalin A-like lectins/glucanases"/>
    <property type="match status" value="4"/>
</dbReference>
<dbReference type="SUPFAM" id="SSF49785">
    <property type="entry name" value="Galactose-binding domain-like"/>
    <property type="match status" value="1"/>
</dbReference>
<dbReference type="PROSITE" id="PS50026">
    <property type="entry name" value="EGF_3"/>
    <property type="match status" value="2"/>
</dbReference>
<dbReference type="PROSITE" id="PS01285">
    <property type="entry name" value="FA58C_1"/>
    <property type="match status" value="1"/>
</dbReference>
<dbReference type="PROSITE" id="PS01286">
    <property type="entry name" value="FA58C_2"/>
    <property type="match status" value="1"/>
</dbReference>
<dbReference type="PROSITE" id="PS50022">
    <property type="entry name" value="FA58C_3"/>
    <property type="match status" value="1"/>
</dbReference>
<dbReference type="PROSITE" id="PS50025">
    <property type="entry name" value="LAM_G_DOMAIN"/>
    <property type="match status" value="4"/>
</dbReference>
<sequence length="1284" mass="145468">MRPPRSNTKAAFSSLQFGLLCLLLLVNNGIKSVQADAFTDYFSDYDCNQPLMERAVLTATSSLTERGPDKARLNGNAAWTPVENTYNHFLTLDLGDPRMVRKIATMGRMHTDEFVTEYIVQYSDDGEFWRSYVNPTSEPQMFKGNSDGNSIHYNVFEVPIIAQWVRINPTRWHDRISMRVELYGCDYISENLYFNGTGLVRYDLRREPITSTKESIRFRFKTAFANGVMMYSRGTQGDYYALQLKDNKMVLNLDLGSRVMTSLSVGSLLDDNVWHDVVISRNQRDIIFSVDRVIVRGRIQGEFTRLNLNRELYLGGVPNVQEGLIVQQNFSGCLENIYFNSTNFIRVMKDSTELGEGYLFTRVNTIYACPSPPIYPVTFTTRSSFVRLKGYENSQRLNVSFYFRTYEETGVMLHHDFYSGGYLKVFLEFGKVKIDLKVKDKARIILDNYDDQFNDGKWHSFVISIEKNRLILNIDQRPMTTTKSMQVATGAQYYIAGGKDKNGFVGCMRLISVDGNYKLPQDWVKGEEVCCGDDVVVDACQMIDRCNPNPCQHKGLCHQNSREFFCDCGHTGYAGAVCHTSNNPLSCLALKNVQHVQQRVNLNLDVDGSGPLEPFPVTCEFYSDGRVITTLSHSQEHTTTVDGFQEPGSFEQSIMYDANQLQIEALLNRSHSCWQRLSYSCRSSRLFNSPSEAGNFRPFSWWISRHNQPMDYWAGALPGSRKCECGILGKCHDPTKWCNCDSNSLEWMEDGGDIREKEYLPVRAVKFGDTGTPLDEKMGRYTLGPLRCEGDDLFSNVVTFRIADASINLPPFDMGHSGDIYLEFRTTQENSVIFHATGPTDYIKLSLNGGNKLQFQYQAGSGPLGVNVGTSYHLNDNNWHTVSVERNRKEARLVVDGSIKAEVREPPGPVRALHLTSDLVIGATTEYRDGYVGCIRALLLNGKMVDLKEYSKRGLYGISTGCVGRCESNPCLNNGTCIERYDGYSCDCRWSAFKGPICADEIGVNLRSSSIIRYEFEGSFRSTIAENIRVGFTTTIPKGFLLGFSSNLTGEYLTIQISNSGHLRCVFDFGFERQEIIFPKKHFGLGQYHDMHFMRKNGGSTVVLKVDNYEPVEYNFDIKASADAQFNNIQYMYIGKNESMTDGFVGCVSRVQFDDIYPLKLMFQQNPPKNVKSLGTQLTEDFCGVEPVTHPPIEIETRPPPLVDEEKLRKAYNEVDSVLLACLLVILFLLLILMFFLIGRYLHRHKGDYLTHEDQGADGADDPDDAVLHSTTGHQVRKRTEIFI</sequence>
<evidence type="ECO:0000250" key="1"/>
<evidence type="ECO:0000255" key="2"/>
<evidence type="ECO:0000255" key="3">
    <source>
        <dbReference type="PROSITE-ProRule" id="PRU00076"/>
    </source>
</evidence>
<evidence type="ECO:0000255" key="4">
    <source>
        <dbReference type="PROSITE-ProRule" id="PRU00081"/>
    </source>
</evidence>
<evidence type="ECO:0000255" key="5">
    <source>
        <dbReference type="PROSITE-ProRule" id="PRU00122"/>
    </source>
</evidence>
<evidence type="ECO:0000269" key="6">
    <source>
    </source>
</evidence>
<evidence type="ECO:0000269" key="7">
    <source>
    </source>
</evidence>
<evidence type="ECO:0000269" key="8">
    <source>
    </source>
</evidence>
<evidence type="ECO:0000269" key="9">
    <source>
    </source>
</evidence>
<evidence type="ECO:0000269" key="10">
    <source>
    </source>
</evidence>
<evidence type="ECO:0000269" key="11">
    <source>
    </source>
</evidence>
<evidence type="ECO:0000305" key="12"/>